<protein>
    <recommendedName>
        <fullName>Movement protein TGB3</fullName>
    </recommendedName>
    <alternativeName>
        <fullName>P17</fullName>
    </alternativeName>
    <alternativeName>
        <fullName>Triple gene block 3 protein</fullName>
        <shortName>TGBp3</shortName>
    </alternativeName>
</protein>
<keyword id="KW-1031">Host cell junction</keyword>
<keyword id="KW-1035">Host cytoplasm</keyword>
<keyword id="KW-1037">Host cytoskeleton</keyword>
<keyword id="KW-1038">Host endoplasmic reticulum</keyword>
<keyword id="KW-1043">Host membrane</keyword>
<keyword id="KW-0472">Membrane</keyword>
<keyword id="KW-0597">Phosphoprotein</keyword>
<keyword id="KW-1185">Reference proteome</keyword>
<keyword id="KW-0812">Transmembrane</keyword>
<keyword id="KW-1133">Transmembrane helix</keyword>
<keyword id="KW-0813">Transport</keyword>
<keyword id="KW-0916">Viral movement protein</keyword>
<accession>Q08552</accession>
<sequence length="153" mass="16830">MEAPAITHSSGCVCSDCQWSGSPTVDTKVYLGSGTHANTTKTRETSFLSVLNDNAWLFVIAALILCLYFIISKPHVDAVYTEFHQDLNGFSMKLAPGVPIDPKVIAAVKNWQKYPFGTDPRENMVTSIVSGLRHSFCILLLVVVLLVYVCHKP</sequence>
<evidence type="ECO:0000250" key="1">
    <source>
        <dbReference type="UniProtKB" id="P04868"/>
    </source>
</evidence>
<evidence type="ECO:0000250" key="2">
    <source>
        <dbReference type="UniProtKB" id="Q9IV52"/>
    </source>
</evidence>
<evidence type="ECO:0000305" key="3"/>
<comment type="function">
    <text evidence="1">Participates in the transport of viral genome to neighboring plant cells directly through plasmodesmata, without any budding. TGBp2 and TGBp3 are necessary for intracellular delivery of TGBp1-containing vRNPs to plasmodesmata. Can gate plasmodesmata and increase their size exclusion limit. Induces host actin cytoskeleton network thickening, which probably plays a major role in virus cell-to-cell movement.</text>
</comment>
<comment type="subunit">
    <text evidence="1">Interacts with movement proteins TGB1 and TGB2. TGB1-TGB3-TGB2 complex formation is enhanced by ATP hydrolysis.</text>
</comment>
<comment type="subcellular location">
    <subcellularLocation>
        <location evidence="1">Host cell junction</location>
        <location evidence="1">Host plasmodesma</location>
    </subcellularLocation>
    <subcellularLocation>
        <location evidence="1">Host endoplasmic reticulum membrane</location>
        <topology evidence="2">Multi-pass membrane protein</topology>
    </subcellularLocation>
    <subcellularLocation>
        <location evidence="1">Host cytoplasm</location>
        <location evidence="1">Host cytoskeleton</location>
    </subcellularLocation>
    <text evidence="1">Probably localizes to plasmodesmata-associated membrane compartments called peripheral membrane bodies (PMBs). Associates with host actin filaments.</text>
</comment>
<comment type="domain">
    <text evidence="2">The 2nd transmembrane domain is involved in plasmodesmata targeting.</text>
</comment>
<comment type="similarity">
    <text evidence="3">Belongs to the virgaviridae TGB3 movement protein family.</text>
</comment>
<feature type="chain" id="PRO_0000409151" description="Movement protein TGB3">
    <location>
        <begin position="1"/>
        <end position="153"/>
    </location>
</feature>
<feature type="topological domain" description="Cytoplasmic" evidence="2">
    <location>
        <begin position="1"/>
        <end position="50"/>
    </location>
</feature>
<feature type="transmembrane region" description="Helical" evidence="2">
    <location>
        <begin position="51"/>
        <end position="71"/>
    </location>
</feature>
<feature type="topological domain" description="Lumenal" evidence="2">
    <location>
        <begin position="72"/>
        <end position="127"/>
    </location>
</feature>
<feature type="transmembrane region" description="Helical" evidence="2">
    <location>
        <begin position="128"/>
        <end position="148"/>
    </location>
</feature>
<feature type="topological domain" description="Cytoplasmic" evidence="2">
    <location>
        <begin position="149"/>
        <end position="153"/>
    </location>
</feature>
<dbReference type="EMBL" id="L07269">
    <property type="protein sequence ID" value="AAA17440.1"/>
    <property type="molecule type" value="Unassigned_DNA"/>
</dbReference>
<dbReference type="RefSeq" id="NP_620032.1">
    <property type="nucleotide sequence ID" value="NC_003668.1"/>
</dbReference>
<dbReference type="SMR" id="Q08552"/>
<dbReference type="GeneID" id="991037"/>
<dbReference type="KEGG" id="vg:991037"/>
<dbReference type="Proteomes" id="UP000001668">
    <property type="component" value="Genome"/>
</dbReference>
<dbReference type="GO" id="GO:0044167">
    <property type="term" value="C:host cell endoplasmic reticulum membrane"/>
    <property type="evidence" value="ECO:0007669"/>
    <property type="project" value="UniProtKB-SubCell"/>
</dbReference>
<dbReference type="GO" id="GO:0044219">
    <property type="term" value="C:host cell plasmodesma"/>
    <property type="evidence" value="ECO:0007669"/>
    <property type="project" value="UniProtKB-SubCell"/>
</dbReference>
<dbReference type="GO" id="GO:0044163">
    <property type="term" value="C:host cytoskeleton"/>
    <property type="evidence" value="ECO:0007669"/>
    <property type="project" value="UniProtKB-SubCell"/>
</dbReference>
<dbReference type="GO" id="GO:0016020">
    <property type="term" value="C:membrane"/>
    <property type="evidence" value="ECO:0007669"/>
    <property type="project" value="UniProtKB-KW"/>
</dbReference>
<dbReference type="GO" id="GO:0046740">
    <property type="term" value="P:transport of virus in host, cell to cell"/>
    <property type="evidence" value="ECO:0007669"/>
    <property type="project" value="UniProtKB-KW"/>
</dbReference>
<dbReference type="InterPro" id="IPR007617">
    <property type="entry name" value="Viral_beta_CD"/>
</dbReference>
<dbReference type="Pfam" id="PF04530">
    <property type="entry name" value="Viral_Beta_CD"/>
    <property type="match status" value="1"/>
</dbReference>
<organismHost>
    <name type="scientific">Arachis hypogaea</name>
    <name type="common">Peanut</name>
    <dbReference type="NCBI Taxonomy" id="3818"/>
</organismHost>
<organismHost>
    <name type="scientific">Setaria italica</name>
    <name type="common">Foxtail millet</name>
    <name type="synonym">Panicum italicum</name>
    <dbReference type="NCBI Taxonomy" id="4555"/>
</organismHost>
<organismHost>
    <name type="scientific">Sorghum arundinaceum</name>
    <dbReference type="NCBI Taxonomy" id="91525"/>
</organismHost>
<organismHost>
    <name type="scientific">Sorghum bicolor</name>
    <name type="common">Sorghum</name>
    <name type="synonym">Sorghum vulgare</name>
    <dbReference type="NCBI Taxonomy" id="4558"/>
</organismHost>
<organism>
    <name type="scientific">Peanut clump virus (isolate 87/TGTA2)</name>
    <name type="common">PCV</name>
    <dbReference type="NCBI Taxonomy" id="652837"/>
    <lineage>
        <taxon>Viruses</taxon>
        <taxon>Riboviria</taxon>
        <taxon>Orthornavirae</taxon>
        <taxon>Kitrinoviricota</taxon>
        <taxon>Alsuviricetes</taxon>
        <taxon>Martellivirales</taxon>
        <taxon>Virgaviridae</taxon>
        <taxon>Pecluvirus</taxon>
        <taxon>Peanut clump virus</taxon>
    </lineage>
</organism>
<name>TGB3_PCV87</name>
<proteinExistence type="inferred from homology"/>
<reference key="1">
    <citation type="journal article" date="1993" name="Virology">
        <title>Nucleotide sequence and genetic organization of peanut clump virus RNA 2 and partial characterization of deleted forms.</title>
        <authorList>
            <person name="Manohar S.K."/>
            <person name="Guilley H."/>
            <person name="Dollet M."/>
            <person name="Richards K."/>
            <person name="Jonard G."/>
        </authorList>
    </citation>
    <scope>NUCLEOTIDE SEQUENCE [GENOMIC RNA]</scope>
</reference>
<reference key="2">
    <citation type="journal article" date="1998" name="Virology">
        <title>Identification of genes involved in replication and movement of peanut clump virus.</title>
        <authorList>
            <person name="Herzog E."/>
            <person name="Hemmer O."/>
            <person name="Hauser S."/>
            <person name="Meyer G."/>
            <person name="Bouzoubaa S."/>
            <person name="Fritsch C."/>
        </authorList>
    </citation>
    <scope>FUNCTION</scope>
</reference>